<name>NUSB_ACTP7</name>
<dbReference type="EMBL" id="CP001091">
    <property type="protein sequence ID" value="ACE60856.1"/>
    <property type="molecule type" value="Genomic_DNA"/>
</dbReference>
<dbReference type="RefSeq" id="WP_005595979.1">
    <property type="nucleotide sequence ID" value="NC_010939.1"/>
</dbReference>
<dbReference type="SMR" id="B3H044"/>
<dbReference type="GeneID" id="48598348"/>
<dbReference type="KEGG" id="apa:APP7_0204"/>
<dbReference type="HOGENOM" id="CLU_087843_4_1_6"/>
<dbReference type="Proteomes" id="UP000001226">
    <property type="component" value="Chromosome"/>
</dbReference>
<dbReference type="GO" id="GO:0005829">
    <property type="term" value="C:cytosol"/>
    <property type="evidence" value="ECO:0007669"/>
    <property type="project" value="TreeGrafter"/>
</dbReference>
<dbReference type="GO" id="GO:0003723">
    <property type="term" value="F:RNA binding"/>
    <property type="evidence" value="ECO:0007669"/>
    <property type="project" value="UniProtKB-UniRule"/>
</dbReference>
<dbReference type="GO" id="GO:0006353">
    <property type="term" value="P:DNA-templated transcription termination"/>
    <property type="evidence" value="ECO:0007669"/>
    <property type="project" value="UniProtKB-UniRule"/>
</dbReference>
<dbReference type="GO" id="GO:0031564">
    <property type="term" value="P:transcription antitermination"/>
    <property type="evidence" value="ECO:0007669"/>
    <property type="project" value="UniProtKB-KW"/>
</dbReference>
<dbReference type="CDD" id="cd00619">
    <property type="entry name" value="Terminator_NusB"/>
    <property type="match status" value="1"/>
</dbReference>
<dbReference type="FunFam" id="1.10.940.10:FF:000001">
    <property type="entry name" value="Transcription antitermination factor NusB"/>
    <property type="match status" value="1"/>
</dbReference>
<dbReference type="Gene3D" id="1.10.940.10">
    <property type="entry name" value="NusB-like"/>
    <property type="match status" value="1"/>
</dbReference>
<dbReference type="HAMAP" id="MF_00073">
    <property type="entry name" value="NusB"/>
    <property type="match status" value="1"/>
</dbReference>
<dbReference type="InterPro" id="IPR035926">
    <property type="entry name" value="NusB-like_sf"/>
</dbReference>
<dbReference type="InterPro" id="IPR011605">
    <property type="entry name" value="NusB_fam"/>
</dbReference>
<dbReference type="InterPro" id="IPR006027">
    <property type="entry name" value="NusB_RsmB_TIM44"/>
</dbReference>
<dbReference type="NCBIfam" id="TIGR01951">
    <property type="entry name" value="nusB"/>
    <property type="match status" value="1"/>
</dbReference>
<dbReference type="PANTHER" id="PTHR11078:SF3">
    <property type="entry name" value="ANTITERMINATION NUSB DOMAIN-CONTAINING PROTEIN"/>
    <property type="match status" value="1"/>
</dbReference>
<dbReference type="PANTHER" id="PTHR11078">
    <property type="entry name" value="N UTILIZATION SUBSTANCE PROTEIN B-RELATED"/>
    <property type="match status" value="1"/>
</dbReference>
<dbReference type="Pfam" id="PF01029">
    <property type="entry name" value="NusB"/>
    <property type="match status" value="1"/>
</dbReference>
<dbReference type="SUPFAM" id="SSF48013">
    <property type="entry name" value="NusB-like"/>
    <property type="match status" value="1"/>
</dbReference>
<organism>
    <name type="scientific">Actinobacillus pleuropneumoniae serotype 7 (strain AP76)</name>
    <dbReference type="NCBI Taxonomy" id="537457"/>
    <lineage>
        <taxon>Bacteria</taxon>
        <taxon>Pseudomonadati</taxon>
        <taxon>Pseudomonadota</taxon>
        <taxon>Gammaproteobacteria</taxon>
        <taxon>Pasteurellales</taxon>
        <taxon>Pasteurellaceae</taxon>
        <taxon>Actinobacillus</taxon>
    </lineage>
</organism>
<proteinExistence type="inferred from homology"/>
<gene>
    <name evidence="1" type="primary">nusB</name>
    <name type="ordered locus">APP7_0204</name>
</gene>
<sequence>MKVSPRRRARECAVQALYSWYVSQNSVEEVELSFVTDQDMNGVDLPYFRKLLRGTVLYVEAIDNDLRPFLDRAEDEVDPIERTILRLSAYELKYELDVPYKVVINEGIEVAKVFGSDDSHKYINGILDKLAPALGRK</sequence>
<feature type="chain" id="PRO_1000092521" description="Transcription antitermination protein NusB">
    <location>
        <begin position="1"/>
        <end position="137"/>
    </location>
</feature>
<accession>B3H044</accession>
<protein>
    <recommendedName>
        <fullName evidence="1">Transcription antitermination protein NusB</fullName>
    </recommendedName>
    <alternativeName>
        <fullName evidence="1">Antitermination factor NusB</fullName>
    </alternativeName>
</protein>
<evidence type="ECO:0000255" key="1">
    <source>
        <dbReference type="HAMAP-Rule" id="MF_00073"/>
    </source>
</evidence>
<keyword id="KW-0694">RNA-binding</keyword>
<keyword id="KW-0804">Transcription</keyword>
<keyword id="KW-0889">Transcription antitermination</keyword>
<keyword id="KW-0805">Transcription regulation</keyword>
<comment type="function">
    <text evidence="1">Involved in transcription antitermination. Required for transcription of ribosomal RNA (rRNA) genes. Binds specifically to the boxA antiterminator sequence of the ribosomal RNA (rrn) operons.</text>
</comment>
<comment type="similarity">
    <text evidence="1">Belongs to the NusB family.</text>
</comment>
<reference key="1">
    <citation type="submission" date="2008-06" db="EMBL/GenBank/DDBJ databases">
        <title>Genome and proteome analysis of A. pleuropneumoniae serotype 7.</title>
        <authorList>
            <person name="Linke B."/>
            <person name="Buettner F."/>
            <person name="Martinez-Arias R."/>
            <person name="Goesmann A."/>
            <person name="Baltes N."/>
            <person name="Tegetmeyer H."/>
            <person name="Singh M."/>
            <person name="Gerlach G.F."/>
        </authorList>
    </citation>
    <scope>NUCLEOTIDE SEQUENCE [LARGE SCALE GENOMIC DNA]</scope>
    <source>
        <strain>AP76</strain>
    </source>
</reference>